<gene>
    <name type="primary">pyroA</name>
    <name type="ORF">AN7725</name>
</gene>
<reference key="1">
    <citation type="journal article" date="1999" name="J. Biol. Chem.">
        <title>The extremely conserved pyroA gene of Aspergillus nidulans is required for pyridoxine synthesis and is required indirectly for resistance to photosensitizers.</title>
        <authorList>
            <person name="Osmani A.H."/>
            <person name="May G.S."/>
            <person name="Osmani S.A."/>
        </authorList>
    </citation>
    <scope>NUCLEOTIDE SEQUENCE [GENOMIC DNA]</scope>
    <scope>FUNCTION</scope>
    <scope>DISRUPTION PHENOTYPE</scope>
</reference>
<reference key="2">
    <citation type="journal article" date="2005" name="Nature">
        <title>Sequencing of Aspergillus nidulans and comparative analysis with A. fumigatus and A. oryzae.</title>
        <authorList>
            <person name="Galagan J.E."/>
            <person name="Calvo S.E."/>
            <person name="Cuomo C."/>
            <person name="Ma L.-J."/>
            <person name="Wortman J.R."/>
            <person name="Batzoglou S."/>
            <person name="Lee S.-I."/>
            <person name="Bastuerkmen M."/>
            <person name="Spevak C.C."/>
            <person name="Clutterbuck J."/>
            <person name="Kapitonov V."/>
            <person name="Jurka J."/>
            <person name="Scazzocchio C."/>
            <person name="Farman M.L."/>
            <person name="Butler J."/>
            <person name="Purcell S."/>
            <person name="Harris S."/>
            <person name="Braus G.H."/>
            <person name="Draht O."/>
            <person name="Busch S."/>
            <person name="D'Enfert C."/>
            <person name="Bouchier C."/>
            <person name="Goldman G.H."/>
            <person name="Bell-Pedersen D."/>
            <person name="Griffiths-Jones S."/>
            <person name="Doonan J.H."/>
            <person name="Yu J."/>
            <person name="Vienken K."/>
            <person name="Pain A."/>
            <person name="Freitag M."/>
            <person name="Selker E.U."/>
            <person name="Archer D.B."/>
            <person name="Penalva M.A."/>
            <person name="Oakley B.R."/>
            <person name="Momany M."/>
            <person name="Tanaka T."/>
            <person name="Kumagai T."/>
            <person name="Asai K."/>
            <person name="Machida M."/>
            <person name="Nierman W.C."/>
            <person name="Denning D.W."/>
            <person name="Caddick M.X."/>
            <person name="Hynes M."/>
            <person name="Paoletti M."/>
            <person name="Fischer R."/>
            <person name="Miller B.L."/>
            <person name="Dyer P.S."/>
            <person name="Sachs M.S."/>
            <person name="Osmani S.A."/>
            <person name="Birren B.W."/>
        </authorList>
    </citation>
    <scope>NUCLEOTIDE SEQUENCE [LARGE SCALE GENOMIC DNA]</scope>
    <source>
        <strain>FGSC A4 / ATCC 38163 / CBS 112.46 / NRRL 194 / M139</strain>
    </source>
</reference>
<reference key="3">
    <citation type="journal article" date="2009" name="Fungal Genet. Biol.">
        <title>The 2008 update of the Aspergillus nidulans genome annotation: a community effort.</title>
        <authorList>
            <person name="Wortman J.R."/>
            <person name="Gilsenan J.M."/>
            <person name="Joardar V."/>
            <person name="Deegan J."/>
            <person name="Clutterbuck J."/>
            <person name="Andersen M.R."/>
            <person name="Archer D."/>
            <person name="Bencina M."/>
            <person name="Braus G."/>
            <person name="Coutinho P."/>
            <person name="von Dohren H."/>
            <person name="Doonan J."/>
            <person name="Driessen A.J."/>
            <person name="Durek P."/>
            <person name="Espeso E."/>
            <person name="Fekete E."/>
            <person name="Flipphi M."/>
            <person name="Estrada C.G."/>
            <person name="Geysens S."/>
            <person name="Goldman G."/>
            <person name="de Groot P.W."/>
            <person name="Hansen K."/>
            <person name="Harris S.D."/>
            <person name="Heinekamp T."/>
            <person name="Helmstaedt K."/>
            <person name="Henrissat B."/>
            <person name="Hofmann G."/>
            <person name="Homan T."/>
            <person name="Horio T."/>
            <person name="Horiuchi H."/>
            <person name="James S."/>
            <person name="Jones M."/>
            <person name="Karaffa L."/>
            <person name="Karanyi Z."/>
            <person name="Kato M."/>
            <person name="Keller N."/>
            <person name="Kelly D.E."/>
            <person name="Kiel J.A."/>
            <person name="Kim J.M."/>
            <person name="van der Klei I.J."/>
            <person name="Klis F.M."/>
            <person name="Kovalchuk A."/>
            <person name="Krasevec N."/>
            <person name="Kubicek C.P."/>
            <person name="Liu B."/>
            <person name="Maccabe A."/>
            <person name="Meyer V."/>
            <person name="Mirabito P."/>
            <person name="Miskei M."/>
            <person name="Mos M."/>
            <person name="Mullins J."/>
            <person name="Nelson D.R."/>
            <person name="Nielsen J."/>
            <person name="Oakley B.R."/>
            <person name="Osmani S.A."/>
            <person name="Pakula T."/>
            <person name="Paszewski A."/>
            <person name="Paulsen I."/>
            <person name="Pilsyk S."/>
            <person name="Pocsi I."/>
            <person name="Punt P.J."/>
            <person name="Ram A.F."/>
            <person name="Ren Q."/>
            <person name="Robellet X."/>
            <person name="Robson G."/>
            <person name="Seiboth B."/>
            <person name="van Solingen P."/>
            <person name="Specht T."/>
            <person name="Sun J."/>
            <person name="Taheri-Talesh N."/>
            <person name="Takeshita N."/>
            <person name="Ussery D."/>
            <person name="vanKuyk P.A."/>
            <person name="Visser H."/>
            <person name="van de Vondervoort P.J."/>
            <person name="de Vries R.P."/>
            <person name="Walton J."/>
            <person name="Xiang X."/>
            <person name="Xiong Y."/>
            <person name="Zeng A.P."/>
            <person name="Brandt B.W."/>
            <person name="Cornell M.J."/>
            <person name="van den Hondel C.A."/>
            <person name="Visser J."/>
            <person name="Oliver S.G."/>
            <person name="Turner G."/>
        </authorList>
    </citation>
    <scope>GENOME REANNOTATION</scope>
    <source>
        <strain>FGSC A4 / ATCC 38163 / CBS 112.46 / NRRL 194 / M139</strain>
    </source>
</reference>
<organism>
    <name type="scientific">Emericella nidulans (strain FGSC A4 / ATCC 38163 / CBS 112.46 / NRRL 194 / M139)</name>
    <name type="common">Aspergillus nidulans</name>
    <dbReference type="NCBI Taxonomy" id="227321"/>
    <lineage>
        <taxon>Eukaryota</taxon>
        <taxon>Fungi</taxon>
        <taxon>Dikarya</taxon>
        <taxon>Ascomycota</taxon>
        <taxon>Pezizomycotina</taxon>
        <taxon>Eurotiomycetes</taxon>
        <taxon>Eurotiomycetidae</taxon>
        <taxon>Eurotiales</taxon>
        <taxon>Aspergillaceae</taxon>
        <taxon>Aspergillus</taxon>
        <taxon>Aspergillus subgen. Nidulantes</taxon>
    </lineage>
</organism>
<name>PDX1_EMENI</name>
<comment type="function">
    <text evidence="3">Catalyzes the formation of pyridoxal 5'-phosphate from ribose 5-phosphate (RBP), glyceraldehyde 3-phosphate (G3P) and ammonia. The ammonia is provided by PDX2. Can also use ribulose 5-phosphate and dihydroxyacetone phosphate as substrates, resulting from enzyme-catalyzed isomerization of RBP and G3P, respectively. Also plays an indirect role in resistance to singlet oxygen-generating photosensitizers.</text>
</comment>
<comment type="catalytic activity">
    <reaction evidence="2">
        <text>aldehydo-D-ribose 5-phosphate + D-glyceraldehyde 3-phosphate + L-glutamine = pyridoxal 5'-phosphate + L-glutamate + phosphate + 3 H2O + H(+)</text>
        <dbReference type="Rhea" id="RHEA:31507"/>
        <dbReference type="ChEBI" id="CHEBI:15377"/>
        <dbReference type="ChEBI" id="CHEBI:15378"/>
        <dbReference type="ChEBI" id="CHEBI:29985"/>
        <dbReference type="ChEBI" id="CHEBI:43474"/>
        <dbReference type="ChEBI" id="CHEBI:58273"/>
        <dbReference type="ChEBI" id="CHEBI:58359"/>
        <dbReference type="ChEBI" id="CHEBI:59776"/>
        <dbReference type="ChEBI" id="CHEBI:597326"/>
        <dbReference type="EC" id="4.3.3.6"/>
    </reaction>
</comment>
<comment type="pathway">
    <text>Cofactor biosynthesis; pyridoxal 5'-phosphate biosynthesis.</text>
</comment>
<comment type="disruption phenotype">
    <text evidence="3">Defects cause some indirect sensitivity to photosensitizers, due to the inability to synthesize pyridoxal 5'-phosphate. Indeed, pyridoxal 5'-phosphate is destroyed in the presence of photosensitizers, and cannot be synthesized in reaction.</text>
</comment>
<comment type="similarity">
    <text evidence="4">Belongs to the PdxS/SNZ family.</text>
</comment>
<proteinExistence type="inferred from homology"/>
<feature type="chain" id="PRO_0000109362" description="Pyridoxal 5'-phosphate synthase subunit pyroA">
    <location>
        <begin position="1"/>
        <end position="304"/>
    </location>
</feature>
<feature type="active site" description="Schiff-base intermediate with D-ribose 5-phosphate" evidence="1">
    <location>
        <position position="85"/>
    </location>
</feature>
<feature type="binding site" evidence="1">
    <location>
        <position position="28"/>
    </location>
    <ligand>
        <name>D-ribose 5-phosphate</name>
        <dbReference type="ChEBI" id="CHEBI:78346"/>
    </ligand>
</feature>
<feature type="binding site" evidence="1">
    <location>
        <position position="157"/>
    </location>
    <ligand>
        <name>D-ribose 5-phosphate</name>
        <dbReference type="ChEBI" id="CHEBI:78346"/>
    </ligand>
</feature>
<feature type="binding site" evidence="2">
    <location>
        <position position="169"/>
    </location>
    <ligand>
        <name>D-glyceraldehyde 3-phosphate</name>
        <dbReference type="ChEBI" id="CHEBI:59776"/>
    </ligand>
</feature>
<feature type="binding site" evidence="1">
    <location>
        <position position="224"/>
    </location>
    <ligand>
        <name>D-ribose 5-phosphate</name>
        <dbReference type="ChEBI" id="CHEBI:78346"/>
    </ligand>
</feature>
<feature type="binding site" evidence="1">
    <location>
        <begin position="245"/>
        <end position="246"/>
    </location>
    <ligand>
        <name>D-ribose 5-phosphate</name>
        <dbReference type="ChEBI" id="CHEBI:78346"/>
    </ligand>
</feature>
<accession>Q9UW83</accession>
<accession>C8VDI9</accession>
<accession>Q5AVF5</accession>
<protein>
    <recommendedName>
        <fullName>Pyridoxal 5'-phosphate synthase subunit pyroA</fullName>
        <shortName>PLP synthase subunit pyroA</shortName>
        <ecNumber>4.3.3.6</ecNumber>
    </recommendedName>
    <alternativeName>
        <fullName>Pdx1</fullName>
    </alternativeName>
</protein>
<keyword id="KW-0456">Lyase</keyword>
<keyword id="KW-0663">Pyridoxal phosphate</keyword>
<keyword id="KW-1185">Reference proteome</keyword>
<keyword id="KW-0704">Schiff base</keyword>
<dbReference type="EC" id="4.3.3.6"/>
<dbReference type="EMBL" id="AF133101">
    <property type="protein sequence ID" value="AAD49809.1"/>
    <property type="molecule type" value="Genomic_DNA"/>
</dbReference>
<dbReference type="EMBL" id="AACD01000131">
    <property type="protein sequence ID" value="EAA61240.1"/>
    <property type="molecule type" value="Genomic_DNA"/>
</dbReference>
<dbReference type="EMBL" id="BN001304">
    <property type="protein sequence ID" value="CBF79979.1"/>
    <property type="molecule type" value="Genomic_DNA"/>
</dbReference>
<dbReference type="PIR" id="T46647">
    <property type="entry name" value="T46647"/>
</dbReference>
<dbReference type="RefSeq" id="XP_680994.1">
    <property type="nucleotide sequence ID" value="XM_675902.2"/>
</dbReference>
<dbReference type="SMR" id="Q9UW83"/>
<dbReference type="FunCoup" id="Q9UW83">
    <property type="interactions" value="243"/>
</dbReference>
<dbReference type="STRING" id="227321.Q9UW83"/>
<dbReference type="EnsemblFungi" id="CBF79979">
    <property type="protein sequence ID" value="CBF79979"/>
    <property type="gene ID" value="ANIA_07725"/>
</dbReference>
<dbReference type="GeneID" id="2869370"/>
<dbReference type="KEGG" id="ani:ANIA_07725"/>
<dbReference type="VEuPathDB" id="FungiDB:AN7725"/>
<dbReference type="eggNOG" id="KOG1606">
    <property type="taxonomic scope" value="Eukaryota"/>
</dbReference>
<dbReference type="HOGENOM" id="CLU_055352_1_0_1"/>
<dbReference type="InParanoid" id="Q9UW83"/>
<dbReference type="OMA" id="RYANRGW"/>
<dbReference type="OrthoDB" id="1660966at2759"/>
<dbReference type="UniPathway" id="UPA00245"/>
<dbReference type="Proteomes" id="UP000000560">
    <property type="component" value="Chromosome IV"/>
</dbReference>
<dbReference type="GO" id="GO:0005576">
    <property type="term" value="C:extracellular region"/>
    <property type="evidence" value="ECO:0000314"/>
    <property type="project" value="AspGD"/>
</dbReference>
<dbReference type="GO" id="GO:0016843">
    <property type="term" value="F:amine-lyase activity"/>
    <property type="evidence" value="ECO:0000318"/>
    <property type="project" value="GO_Central"/>
</dbReference>
<dbReference type="GO" id="GO:0036381">
    <property type="term" value="F:pyridoxal 5'-phosphate synthase (glutamine hydrolysing) activity"/>
    <property type="evidence" value="ECO:0007669"/>
    <property type="project" value="UniProtKB-EC"/>
</dbReference>
<dbReference type="GO" id="GO:0006520">
    <property type="term" value="P:amino acid metabolic process"/>
    <property type="evidence" value="ECO:0000318"/>
    <property type="project" value="GO_Central"/>
</dbReference>
<dbReference type="GO" id="GO:0042823">
    <property type="term" value="P:pyridoxal phosphate biosynthetic process"/>
    <property type="evidence" value="ECO:0000318"/>
    <property type="project" value="GO_Central"/>
</dbReference>
<dbReference type="GO" id="GO:0008615">
    <property type="term" value="P:pyridoxine biosynthetic process"/>
    <property type="evidence" value="ECO:0000315"/>
    <property type="project" value="AspGD"/>
</dbReference>
<dbReference type="CDD" id="cd04727">
    <property type="entry name" value="pdxS"/>
    <property type="match status" value="1"/>
</dbReference>
<dbReference type="FunFam" id="3.20.20.70:FF:000001">
    <property type="entry name" value="Pyridoxine biosynthesis protein PDX1"/>
    <property type="match status" value="1"/>
</dbReference>
<dbReference type="Gene3D" id="3.20.20.70">
    <property type="entry name" value="Aldolase class I"/>
    <property type="match status" value="1"/>
</dbReference>
<dbReference type="HAMAP" id="MF_01824">
    <property type="entry name" value="PdxS"/>
    <property type="match status" value="1"/>
</dbReference>
<dbReference type="InterPro" id="IPR013785">
    <property type="entry name" value="Aldolase_TIM"/>
</dbReference>
<dbReference type="InterPro" id="IPR001852">
    <property type="entry name" value="PdxS/SNZ"/>
</dbReference>
<dbReference type="InterPro" id="IPR033755">
    <property type="entry name" value="PdxS/SNZ_N"/>
</dbReference>
<dbReference type="InterPro" id="IPR011060">
    <property type="entry name" value="RibuloseP-bd_barrel"/>
</dbReference>
<dbReference type="NCBIfam" id="NF003215">
    <property type="entry name" value="PRK04180.1"/>
    <property type="match status" value="1"/>
</dbReference>
<dbReference type="NCBIfam" id="TIGR00343">
    <property type="entry name" value="pyridoxal 5'-phosphate synthase lyase subunit PdxS"/>
    <property type="match status" value="1"/>
</dbReference>
<dbReference type="PANTHER" id="PTHR31829">
    <property type="entry name" value="PYRIDOXAL 5'-PHOSPHATE SYNTHASE SUBUNIT SNZ1-RELATED"/>
    <property type="match status" value="1"/>
</dbReference>
<dbReference type="PANTHER" id="PTHR31829:SF0">
    <property type="entry name" value="PYRIDOXAL 5'-PHOSPHATE SYNTHASE SUBUNIT SNZ1-RELATED"/>
    <property type="match status" value="1"/>
</dbReference>
<dbReference type="Pfam" id="PF01680">
    <property type="entry name" value="SOR_SNZ"/>
    <property type="match status" value="1"/>
</dbReference>
<dbReference type="PIRSF" id="PIRSF029271">
    <property type="entry name" value="Pdx1"/>
    <property type="match status" value="1"/>
</dbReference>
<dbReference type="SUPFAM" id="SSF51366">
    <property type="entry name" value="Ribulose-phoshate binding barrel"/>
    <property type="match status" value="1"/>
</dbReference>
<dbReference type="PROSITE" id="PS01235">
    <property type="entry name" value="PDXS_SNZ_1"/>
    <property type="match status" value="1"/>
</dbReference>
<dbReference type="PROSITE" id="PS51129">
    <property type="entry name" value="PDXS_SNZ_2"/>
    <property type="match status" value="1"/>
</dbReference>
<evidence type="ECO:0000250" key="1">
    <source>
        <dbReference type="UniProtKB" id="O59080"/>
    </source>
</evidence>
<evidence type="ECO:0000250" key="2">
    <source>
        <dbReference type="UniProtKB" id="Q03148"/>
    </source>
</evidence>
<evidence type="ECO:0000269" key="3">
    <source>
    </source>
</evidence>
<evidence type="ECO:0000305" key="4"/>
<sequence>MAATNGASNDFTVKAGLAQMLKGGVIMDVVNAEQARIAEEAGAAAVMALERVPADIRAQGGVARMSDPSMIKEIMEAVTIPVMAKARIGHFVECQILEAIGVDYIDESEVLTPADNLYHVTKHNFKAPFVCGCRNLGEALRRISEGAAMIRTKGEAGTGDVVEAVKHMRTVNAEIARARAILQSSPDPEPELRAYARELEAPYELLREAAEKGRLPVVNFAAGGVATPADAALMMQLGCDGVFVGSGIFKSGDAKKRAKAIVQAVTHYKDPKVLAEVSQGLGEAMVGINVSHMKDEDKLAKRGW</sequence>